<gene>
    <name evidence="1" type="primary">pyrB</name>
    <name type="ordered locus">Bcep18194_A3965</name>
</gene>
<name>PYRB_BURL3</name>
<reference key="1">
    <citation type="submission" date="2005-10" db="EMBL/GenBank/DDBJ databases">
        <title>Complete sequence of chromosome 1 of Burkholderia sp. 383.</title>
        <authorList>
            <consortium name="US DOE Joint Genome Institute"/>
            <person name="Copeland A."/>
            <person name="Lucas S."/>
            <person name="Lapidus A."/>
            <person name="Barry K."/>
            <person name="Detter J.C."/>
            <person name="Glavina T."/>
            <person name="Hammon N."/>
            <person name="Israni S."/>
            <person name="Pitluck S."/>
            <person name="Chain P."/>
            <person name="Malfatti S."/>
            <person name="Shin M."/>
            <person name="Vergez L."/>
            <person name="Schmutz J."/>
            <person name="Larimer F."/>
            <person name="Land M."/>
            <person name="Kyrpides N."/>
            <person name="Lykidis A."/>
            <person name="Richardson P."/>
        </authorList>
    </citation>
    <scope>NUCLEOTIDE SEQUENCE [LARGE SCALE GENOMIC DNA]</scope>
    <source>
        <strain>ATCC 17760 / DSM 23089 / LMG 22485 / NCIMB 9086 / R18194 / 383</strain>
    </source>
</reference>
<feature type="chain" id="PRO_0000329103" description="Aspartate carbamoyltransferase catalytic subunit">
    <location>
        <begin position="1"/>
        <end position="343"/>
    </location>
</feature>
<feature type="region of interest" description="Disordered" evidence="2">
    <location>
        <begin position="1"/>
        <end position="20"/>
    </location>
</feature>
<feature type="compositionally biased region" description="Polar residues" evidence="2">
    <location>
        <begin position="1"/>
        <end position="14"/>
    </location>
</feature>
<feature type="binding site" evidence="1">
    <location>
        <position position="91"/>
    </location>
    <ligand>
        <name>carbamoyl phosphate</name>
        <dbReference type="ChEBI" id="CHEBI:58228"/>
    </ligand>
</feature>
<feature type="binding site" evidence="1">
    <location>
        <position position="92"/>
    </location>
    <ligand>
        <name>carbamoyl phosphate</name>
        <dbReference type="ChEBI" id="CHEBI:58228"/>
    </ligand>
</feature>
<feature type="binding site" evidence="1">
    <location>
        <position position="119"/>
    </location>
    <ligand>
        <name>L-aspartate</name>
        <dbReference type="ChEBI" id="CHEBI:29991"/>
    </ligand>
</feature>
<feature type="binding site" evidence="1">
    <location>
        <position position="141"/>
    </location>
    <ligand>
        <name>carbamoyl phosphate</name>
        <dbReference type="ChEBI" id="CHEBI:58228"/>
    </ligand>
</feature>
<feature type="binding site" evidence="1">
    <location>
        <position position="171"/>
    </location>
    <ligand>
        <name>carbamoyl phosphate</name>
        <dbReference type="ChEBI" id="CHEBI:58228"/>
    </ligand>
</feature>
<feature type="binding site" evidence="1">
    <location>
        <position position="174"/>
    </location>
    <ligand>
        <name>carbamoyl phosphate</name>
        <dbReference type="ChEBI" id="CHEBI:58228"/>
    </ligand>
</feature>
<feature type="binding site" evidence="1">
    <location>
        <position position="204"/>
    </location>
    <ligand>
        <name>L-aspartate</name>
        <dbReference type="ChEBI" id="CHEBI:29991"/>
    </ligand>
</feature>
<feature type="binding site" evidence="1">
    <location>
        <position position="259"/>
    </location>
    <ligand>
        <name>L-aspartate</name>
        <dbReference type="ChEBI" id="CHEBI:29991"/>
    </ligand>
</feature>
<feature type="binding site" evidence="1">
    <location>
        <position position="300"/>
    </location>
    <ligand>
        <name>carbamoyl phosphate</name>
        <dbReference type="ChEBI" id="CHEBI:58228"/>
    </ligand>
</feature>
<feature type="binding site" evidence="1">
    <location>
        <position position="301"/>
    </location>
    <ligand>
        <name>carbamoyl phosphate</name>
        <dbReference type="ChEBI" id="CHEBI:58228"/>
    </ligand>
</feature>
<proteinExistence type="inferred from homology"/>
<evidence type="ECO:0000255" key="1">
    <source>
        <dbReference type="HAMAP-Rule" id="MF_00001"/>
    </source>
</evidence>
<evidence type="ECO:0000256" key="2">
    <source>
        <dbReference type="SAM" id="MobiDB-lite"/>
    </source>
</evidence>
<evidence type="ECO:0000305" key="3"/>
<comment type="function">
    <text evidence="1">Catalyzes the condensation of carbamoyl phosphate and aspartate to form carbamoyl aspartate and inorganic phosphate, the committed step in the de novo pyrimidine nucleotide biosynthesis pathway.</text>
</comment>
<comment type="catalytic activity">
    <reaction evidence="1">
        <text>carbamoyl phosphate + L-aspartate = N-carbamoyl-L-aspartate + phosphate + H(+)</text>
        <dbReference type="Rhea" id="RHEA:20013"/>
        <dbReference type="ChEBI" id="CHEBI:15378"/>
        <dbReference type="ChEBI" id="CHEBI:29991"/>
        <dbReference type="ChEBI" id="CHEBI:32814"/>
        <dbReference type="ChEBI" id="CHEBI:43474"/>
        <dbReference type="ChEBI" id="CHEBI:58228"/>
        <dbReference type="EC" id="2.1.3.2"/>
    </reaction>
</comment>
<comment type="pathway">
    <text evidence="1">Pyrimidine metabolism; UMP biosynthesis via de novo pathway; (S)-dihydroorotate from bicarbonate: step 2/3.</text>
</comment>
<comment type="subunit">
    <text evidence="1">Heterododecamer (2C3:3R2) of six catalytic PyrB chains organized as two trimers (C3), and six regulatory PyrI chains organized as three dimers (R2).</text>
</comment>
<comment type="similarity">
    <text evidence="1">Belongs to the aspartate/ornithine carbamoyltransferase superfamily. ATCase family.</text>
</comment>
<comment type="sequence caution" evidence="3">
    <conflict type="erroneous initiation">
        <sequence resource="EMBL-CDS" id="ABB07564"/>
    </conflict>
</comment>
<protein>
    <recommendedName>
        <fullName evidence="1">Aspartate carbamoyltransferase catalytic subunit</fullName>
        <ecNumber evidence="1">2.1.3.2</ecNumber>
    </recommendedName>
    <alternativeName>
        <fullName evidence="1">Aspartate transcarbamylase</fullName>
        <shortName evidence="1">ATCase</shortName>
    </alternativeName>
</protein>
<accession>Q39J02</accession>
<keyword id="KW-0665">Pyrimidine biosynthesis</keyword>
<keyword id="KW-0808">Transferase</keyword>
<organism>
    <name type="scientific">Burkholderia lata (strain ATCC 17760 / DSM 23089 / LMG 22485 / NCIMB 9086 / R18194 / 383)</name>
    <dbReference type="NCBI Taxonomy" id="482957"/>
    <lineage>
        <taxon>Bacteria</taxon>
        <taxon>Pseudomonadati</taxon>
        <taxon>Pseudomonadota</taxon>
        <taxon>Betaproteobacteria</taxon>
        <taxon>Burkholderiales</taxon>
        <taxon>Burkholderiaceae</taxon>
        <taxon>Burkholderia</taxon>
        <taxon>Burkholderia cepacia complex</taxon>
    </lineage>
</organism>
<sequence>MTTDTTGRTGNPAATASPDRFRYGFLKGNPQLTKNGELKHLLSIEGLPRSIVNHILDTAEQFVSVTDREVKKVPLLRGKSVFNLFFENSTRTRTTFEIAATRLSADVLNLNINASSTSKGESLLDTINNLSAMHADLFVVRHASSGAPYLIAEHCAPHVHVINAGDGRHAHPTQGLLDMYTIRHYKRDFTKLRVAIVGDILHSRVARSDIHALTTLGVPEVRAIGPRTLLPGGLEQMGVKVFHNLDEGLKGVDVIIMLRLQNERMSGALLPSAQEYFKTWGLTPERLALAAPDAIVMHPGPMNRGVEIDSQVADGPQSVILNQVTFGIAVRMAVMGIVAGNSD</sequence>
<dbReference type="EC" id="2.1.3.2" evidence="1"/>
<dbReference type="EMBL" id="CP000151">
    <property type="protein sequence ID" value="ABB07564.1"/>
    <property type="status" value="ALT_INIT"/>
    <property type="molecule type" value="Genomic_DNA"/>
</dbReference>
<dbReference type="RefSeq" id="WP_041492755.1">
    <property type="nucleotide sequence ID" value="NZ_WNDV01000014.1"/>
</dbReference>
<dbReference type="SMR" id="Q39J02"/>
<dbReference type="GeneID" id="45093870"/>
<dbReference type="KEGG" id="bur:Bcep18194_A3965"/>
<dbReference type="PATRIC" id="fig|482957.22.peg.841"/>
<dbReference type="HOGENOM" id="CLU_043846_2_0_4"/>
<dbReference type="UniPathway" id="UPA00070">
    <property type="reaction ID" value="UER00116"/>
</dbReference>
<dbReference type="Proteomes" id="UP000002705">
    <property type="component" value="Chromosome 1"/>
</dbReference>
<dbReference type="GO" id="GO:0005829">
    <property type="term" value="C:cytosol"/>
    <property type="evidence" value="ECO:0007669"/>
    <property type="project" value="TreeGrafter"/>
</dbReference>
<dbReference type="GO" id="GO:0016597">
    <property type="term" value="F:amino acid binding"/>
    <property type="evidence" value="ECO:0007669"/>
    <property type="project" value="InterPro"/>
</dbReference>
<dbReference type="GO" id="GO:0004070">
    <property type="term" value="F:aspartate carbamoyltransferase activity"/>
    <property type="evidence" value="ECO:0007669"/>
    <property type="project" value="UniProtKB-UniRule"/>
</dbReference>
<dbReference type="GO" id="GO:0006207">
    <property type="term" value="P:'de novo' pyrimidine nucleobase biosynthetic process"/>
    <property type="evidence" value="ECO:0007669"/>
    <property type="project" value="InterPro"/>
</dbReference>
<dbReference type="GO" id="GO:0044205">
    <property type="term" value="P:'de novo' UMP biosynthetic process"/>
    <property type="evidence" value="ECO:0007669"/>
    <property type="project" value="UniProtKB-UniRule"/>
</dbReference>
<dbReference type="GO" id="GO:0006520">
    <property type="term" value="P:amino acid metabolic process"/>
    <property type="evidence" value="ECO:0007669"/>
    <property type="project" value="InterPro"/>
</dbReference>
<dbReference type="FunFam" id="3.40.50.1370:FF:000007">
    <property type="entry name" value="Aspartate carbamoyltransferase"/>
    <property type="match status" value="1"/>
</dbReference>
<dbReference type="Gene3D" id="3.40.50.1370">
    <property type="entry name" value="Aspartate/ornithine carbamoyltransferase"/>
    <property type="match status" value="2"/>
</dbReference>
<dbReference type="HAMAP" id="MF_00001">
    <property type="entry name" value="Asp_carb_tr"/>
    <property type="match status" value="1"/>
</dbReference>
<dbReference type="InterPro" id="IPR006132">
    <property type="entry name" value="Asp/Orn_carbamoyltranf_P-bd"/>
</dbReference>
<dbReference type="InterPro" id="IPR006130">
    <property type="entry name" value="Asp/Orn_carbamoylTrfase"/>
</dbReference>
<dbReference type="InterPro" id="IPR036901">
    <property type="entry name" value="Asp/Orn_carbamoylTrfase_sf"/>
</dbReference>
<dbReference type="InterPro" id="IPR002082">
    <property type="entry name" value="Asp_carbamoyltransf"/>
</dbReference>
<dbReference type="InterPro" id="IPR006131">
    <property type="entry name" value="Asp_carbamoyltransf_Asp/Orn-bd"/>
</dbReference>
<dbReference type="NCBIfam" id="TIGR00670">
    <property type="entry name" value="asp_carb_tr"/>
    <property type="match status" value="1"/>
</dbReference>
<dbReference type="NCBIfam" id="NF002032">
    <property type="entry name" value="PRK00856.1"/>
    <property type="match status" value="1"/>
</dbReference>
<dbReference type="PANTHER" id="PTHR45753:SF6">
    <property type="entry name" value="ASPARTATE CARBAMOYLTRANSFERASE"/>
    <property type="match status" value="1"/>
</dbReference>
<dbReference type="PANTHER" id="PTHR45753">
    <property type="entry name" value="ORNITHINE CARBAMOYLTRANSFERASE, MITOCHONDRIAL"/>
    <property type="match status" value="1"/>
</dbReference>
<dbReference type="Pfam" id="PF00185">
    <property type="entry name" value="OTCace"/>
    <property type="match status" value="1"/>
</dbReference>
<dbReference type="Pfam" id="PF02729">
    <property type="entry name" value="OTCace_N"/>
    <property type="match status" value="1"/>
</dbReference>
<dbReference type="PRINTS" id="PR00100">
    <property type="entry name" value="AOTCASE"/>
</dbReference>
<dbReference type="PRINTS" id="PR00101">
    <property type="entry name" value="ATCASE"/>
</dbReference>
<dbReference type="SUPFAM" id="SSF53671">
    <property type="entry name" value="Aspartate/ornithine carbamoyltransferase"/>
    <property type="match status" value="1"/>
</dbReference>
<dbReference type="PROSITE" id="PS00097">
    <property type="entry name" value="CARBAMOYLTRANSFERASE"/>
    <property type="match status" value="1"/>
</dbReference>